<dbReference type="SMR" id="P86904"/>
<dbReference type="GO" id="GO:0005576">
    <property type="term" value="C:extracellular region"/>
    <property type="evidence" value="ECO:0007669"/>
    <property type="project" value="UniProtKB-SubCell"/>
</dbReference>
<dbReference type="GO" id="GO:0006952">
    <property type="term" value="P:defense response"/>
    <property type="evidence" value="ECO:0007669"/>
    <property type="project" value="UniProtKB-KW"/>
</dbReference>
<dbReference type="InterPro" id="IPR005535">
    <property type="entry name" value="Cyclotide"/>
</dbReference>
<dbReference type="InterPro" id="IPR012323">
    <property type="entry name" value="Cyclotide_bracelet_CS"/>
</dbReference>
<dbReference type="InterPro" id="IPR036146">
    <property type="entry name" value="Cyclotide_sf"/>
</dbReference>
<dbReference type="Pfam" id="PF03784">
    <property type="entry name" value="Cyclotide"/>
    <property type="match status" value="1"/>
</dbReference>
<dbReference type="PIRSF" id="PIRSF037891">
    <property type="entry name" value="Cycloviolacin"/>
    <property type="match status" value="1"/>
</dbReference>
<dbReference type="SUPFAM" id="SSF57038">
    <property type="entry name" value="Cyclotides"/>
    <property type="match status" value="1"/>
</dbReference>
<dbReference type="PROSITE" id="PS51052">
    <property type="entry name" value="CYCLOTIDE"/>
    <property type="match status" value="1"/>
</dbReference>
<dbReference type="PROSITE" id="PS60008">
    <property type="entry name" value="CYCLOTIDE_BRACELET"/>
    <property type="match status" value="1"/>
</dbReference>
<accession>P86904</accession>
<name>CYCQ_CLITE</name>
<protein>
    <recommendedName>
        <fullName evidence="4">Cyclotide cter-Q</fullName>
    </recommendedName>
</protein>
<proteinExistence type="evidence at protein level"/>
<organism>
    <name type="scientific">Clitoria ternatea</name>
    <name type="common">Butterfly pea</name>
    <dbReference type="NCBI Taxonomy" id="43366"/>
    <lineage>
        <taxon>Eukaryota</taxon>
        <taxon>Viridiplantae</taxon>
        <taxon>Streptophyta</taxon>
        <taxon>Embryophyta</taxon>
        <taxon>Tracheophyta</taxon>
        <taxon>Spermatophyta</taxon>
        <taxon>Magnoliopsida</taxon>
        <taxon>eudicotyledons</taxon>
        <taxon>Gunneridae</taxon>
        <taxon>Pentapetalae</taxon>
        <taxon>rosids</taxon>
        <taxon>fabids</taxon>
        <taxon>Fabales</taxon>
        <taxon>Fabaceae</taxon>
        <taxon>Papilionoideae</taxon>
        <taxon>50 kb inversion clade</taxon>
        <taxon>NPAAA clade</taxon>
        <taxon>indigoferoid/millettioid clade</taxon>
        <taxon>Phaseoleae</taxon>
        <taxon>Clitoria</taxon>
    </lineage>
</organism>
<keyword id="KW-0903">Direct protein sequencing</keyword>
<keyword id="KW-1015">Disulfide bond</keyword>
<keyword id="KW-0960">Knottin</keyword>
<keyword id="KW-0558">Oxidation</keyword>
<keyword id="KW-0611">Plant defense</keyword>
<keyword id="KW-0964">Secreted</keyword>
<reference evidence="5" key="1">
    <citation type="journal article" date="2011" name="Proc. Natl. Acad. Sci. U.S.A.">
        <title>Discovery of an unusual biosynthetic origin for circular proteins in legumes.</title>
        <authorList>
            <person name="Poth A.G."/>
            <person name="Colgrave M.L."/>
            <person name="Lyons R.E."/>
            <person name="Daly N.L."/>
            <person name="Craik D.J."/>
        </authorList>
    </citation>
    <scope>PROTEIN SEQUENCE</scope>
    <scope>CYCLIZATION</scope>
    <scope>MASS SPECTROMETRY</scope>
    <source>
        <tissue evidence="3">Leaf</tissue>
    </source>
</reference>
<comment type="function">
    <text evidence="1 2">Probably participates in a plant defense mechanism.</text>
</comment>
<comment type="subcellular location">
    <subcellularLocation>
        <location evidence="1">Secreted</location>
    </subcellularLocation>
</comment>
<comment type="domain">
    <text evidence="5">The presence of a 'disulfide through disulfide knot' structurally defines this protein as a knottin.</text>
</comment>
<comment type="PTM">
    <text evidence="2 3">This is a cyclic peptide.</text>
</comment>
<comment type="mass spectrometry"/>
<comment type="similarity">
    <text evidence="2">Belongs to the cyclotide family. Bracelet subfamily.</text>
</comment>
<comment type="caution">
    <text evidence="5">This peptide is cyclic. The start position was chosen by similarity to cyclotide cter-A for which the DNA sequence is known.</text>
</comment>
<feature type="peptide" id="PRO_0000412642" description="Cyclotide cter-Q" evidence="2 3">
    <location>
        <begin position="1"/>
        <end position="30"/>
    </location>
</feature>
<feature type="disulfide bond" evidence="1 2">
    <location>
        <begin position="4"/>
        <end position="20"/>
    </location>
</feature>
<feature type="disulfide bond" evidence="1 2">
    <location>
        <begin position="8"/>
        <end position="22"/>
    </location>
</feature>
<feature type="disulfide bond" evidence="1 2">
    <location>
        <begin position="13"/>
        <end position="27"/>
    </location>
</feature>
<feature type="cross-link" description="Cyclopeptide (Gly-Asn)" evidence="3">
    <location>
        <begin position="1"/>
        <end position="30"/>
    </location>
</feature>
<sequence>GIPCGESCVFIPCISTVIGCSCKNKVCYRN</sequence>
<evidence type="ECO:0000250" key="1">
    <source>
        <dbReference type="UniProtKB" id="P86899"/>
    </source>
</evidence>
<evidence type="ECO:0000255" key="2">
    <source>
        <dbReference type="PROSITE-ProRule" id="PRU00395"/>
    </source>
</evidence>
<evidence type="ECO:0000269" key="3">
    <source>
    </source>
</evidence>
<evidence type="ECO:0000303" key="4">
    <source>
    </source>
</evidence>
<evidence type="ECO:0000305" key="5"/>